<dbReference type="EMBL" id="AE005673">
    <property type="protein sequence ID" value="AAK22130.1"/>
    <property type="molecule type" value="Genomic_DNA"/>
</dbReference>
<dbReference type="PIR" id="F87266">
    <property type="entry name" value="F87266"/>
</dbReference>
<dbReference type="RefSeq" id="NP_418962.1">
    <property type="nucleotide sequence ID" value="NC_002696.2"/>
</dbReference>
<dbReference type="RefSeq" id="WP_010918032.1">
    <property type="nucleotide sequence ID" value="NC_002696.2"/>
</dbReference>
<dbReference type="SMR" id="Q9ABS7"/>
<dbReference type="STRING" id="190650.CC_0143"/>
<dbReference type="EnsemblBacteria" id="AAK22130">
    <property type="protein sequence ID" value="AAK22130"/>
    <property type="gene ID" value="CC_0143"/>
</dbReference>
<dbReference type="KEGG" id="ccr:CC_0143"/>
<dbReference type="PATRIC" id="fig|190650.5.peg.140"/>
<dbReference type="eggNOG" id="COG0792">
    <property type="taxonomic scope" value="Bacteria"/>
</dbReference>
<dbReference type="HOGENOM" id="CLU_115353_0_2_5"/>
<dbReference type="BioCyc" id="CAULO:CC0143-MONOMER"/>
<dbReference type="Proteomes" id="UP000001816">
    <property type="component" value="Chromosome"/>
</dbReference>
<dbReference type="GO" id="GO:0003676">
    <property type="term" value="F:nucleic acid binding"/>
    <property type="evidence" value="ECO:0007669"/>
    <property type="project" value="InterPro"/>
</dbReference>
<dbReference type="Gene3D" id="3.40.1350.10">
    <property type="match status" value="1"/>
</dbReference>
<dbReference type="HAMAP" id="MF_00048">
    <property type="entry name" value="UPF0102"/>
    <property type="match status" value="1"/>
</dbReference>
<dbReference type="InterPro" id="IPR011335">
    <property type="entry name" value="Restrct_endonuc-II-like"/>
</dbReference>
<dbReference type="InterPro" id="IPR011856">
    <property type="entry name" value="tRNA_endonuc-like_dom_sf"/>
</dbReference>
<dbReference type="InterPro" id="IPR003509">
    <property type="entry name" value="UPF0102_YraN-like"/>
</dbReference>
<dbReference type="NCBIfam" id="NF009151">
    <property type="entry name" value="PRK12497.1-5"/>
    <property type="match status" value="1"/>
</dbReference>
<dbReference type="PANTHER" id="PTHR34039">
    <property type="entry name" value="UPF0102 PROTEIN YRAN"/>
    <property type="match status" value="1"/>
</dbReference>
<dbReference type="PANTHER" id="PTHR34039:SF1">
    <property type="entry name" value="UPF0102 PROTEIN YRAN"/>
    <property type="match status" value="1"/>
</dbReference>
<dbReference type="Pfam" id="PF02021">
    <property type="entry name" value="UPF0102"/>
    <property type="match status" value="1"/>
</dbReference>
<dbReference type="SUPFAM" id="SSF52980">
    <property type="entry name" value="Restriction endonuclease-like"/>
    <property type="match status" value="1"/>
</dbReference>
<sequence>MAAGVRQSRGTAARKVGRRAEVIAALWLMAKGYRILGFRLATPLGEIDLLAQRGKVLAVVEVKQRTTIEDALDAVKPTQRERLRRAATHLAAHRAGLRDLLVRLDLIAMAPGRPPRHLPDAWGGA</sequence>
<organism>
    <name type="scientific">Caulobacter vibrioides (strain ATCC 19089 / CIP 103742 / CB 15)</name>
    <name type="common">Caulobacter crescentus</name>
    <dbReference type="NCBI Taxonomy" id="190650"/>
    <lineage>
        <taxon>Bacteria</taxon>
        <taxon>Pseudomonadati</taxon>
        <taxon>Pseudomonadota</taxon>
        <taxon>Alphaproteobacteria</taxon>
        <taxon>Caulobacterales</taxon>
        <taxon>Caulobacteraceae</taxon>
        <taxon>Caulobacter</taxon>
    </lineage>
</organism>
<keyword id="KW-1185">Reference proteome</keyword>
<reference key="1">
    <citation type="journal article" date="2001" name="Proc. Natl. Acad. Sci. U.S.A.">
        <title>Complete genome sequence of Caulobacter crescentus.</title>
        <authorList>
            <person name="Nierman W.C."/>
            <person name="Feldblyum T.V."/>
            <person name="Laub M.T."/>
            <person name="Paulsen I.T."/>
            <person name="Nelson K.E."/>
            <person name="Eisen J.A."/>
            <person name="Heidelberg J.F."/>
            <person name="Alley M.R.K."/>
            <person name="Ohta N."/>
            <person name="Maddock J.R."/>
            <person name="Potocka I."/>
            <person name="Nelson W.C."/>
            <person name="Newton A."/>
            <person name="Stephens C."/>
            <person name="Phadke N.D."/>
            <person name="Ely B."/>
            <person name="DeBoy R.T."/>
            <person name="Dodson R.J."/>
            <person name="Durkin A.S."/>
            <person name="Gwinn M.L."/>
            <person name="Haft D.H."/>
            <person name="Kolonay J.F."/>
            <person name="Smit J."/>
            <person name="Craven M.B."/>
            <person name="Khouri H.M."/>
            <person name="Shetty J."/>
            <person name="Berry K.J."/>
            <person name="Utterback T.R."/>
            <person name="Tran K."/>
            <person name="Wolf A.M."/>
            <person name="Vamathevan J.J."/>
            <person name="Ermolaeva M.D."/>
            <person name="White O."/>
            <person name="Salzberg S.L."/>
            <person name="Venter J.C."/>
            <person name="Shapiro L."/>
            <person name="Fraser C.M."/>
        </authorList>
    </citation>
    <scope>NUCLEOTIDE SEQUENCE [LARGE SCALE GENOMIC DNA]</scope>
    <source>
        <strain>ATCC 19089 / CIP 103742 / CB 15</strain>
    </source>
</reference>
<feature type="chain" id="PRO_0000167340" description="UPF0102 protein CC_0143">
    <location>
        <begin position="1"/>
        <end position="125"/>
    </location>
</feature>
<protein>
    <recommendedName>
        <fullName>UPF0102 protein CC_0143</fullName>
    </recommendedName>
</protein>
<comment type="similarity">
    <text evidence="1">Belongs to the UPF0102 family.</text>
</comment>
<evidence type="ECO:0000305" key="1"/>
<gene>
    <name type="ordered locus">CC_0143</name>
</gene>
<accession>Q9ABS7</accession>
<proteinExistence type="inferred from homology"/>
<name>Y143_CAUVC</name>